<protein>
    <recommendedName>
        <fullName evidence="1">Periplasmic nitrate reductase</fullName>
        <ecNumber evidence="1">1.9.6.1</ecNumber>
    </recommendedName>
</protein>
<gene>
    <name evidence="1" type="primary">napA</name>
    <name type="ordered locus">UTI89_C2484</name>
</gene>
<dbReference type="EC" id="1.9.6.1" evidence="1"/>
<dbReference type="EMBL" id="CP000243">
    <property type="protein sequence ID" value="ABE07951.1"/>
    <property type="molecule type" value="Genomic_DNA"/>
</dbReference>
<dbReference type="RefSeq" id="WP_000778044.1">
    <property type="nucleotide sequence ID" value="NZ_CP064825.1"/>
</dbReference>
<dbReference type="SMR" id="Q1R9L3"/>
<dbReference type="KEGG" id="eci:UTI89_C2484"/>
<dbReference type="HOGENOM" id="CLU_000422_13_4_6"/>
<dbReference type="Proteomes" id="UP000001952">
    <property type="component" value="Chromosome"/>
</dbReference>
<dbReference type="GO" id="GO:0016020">
    <property type="term" value="C:membrane"/>
    <property type="evidence" value="ECO:0007669"/>
    <property type="project" value="TreeGrafter"/>
</dbReference>
<dbReference type="GO" id="GO:0009325">
    <property type="term" value="C:nitrate reductase complex"/>
    <property type="evidence" value="ECO:0007669"/>
    <property type="project" value="TreeGrafter"/>
</dbReference>
<dbReference type="GO" id="GO:0042597">
    <property type="term" value="C:periplasmic space"/>
    <property type="evidence" value="ECO:0007669"/>
    <property type="project" value="UniProtKB-SubCell"/>
</dbReference>
<dbReference type="GO" id="GO:0051539">
    <property type="term" value="F:4 iron, 4 sulfur cluster binding"/>
    <property type="evidence" value="ECO:0007669"/>
    <property type="project" value="UniProtKB-KW"/>
</dbReference>
<dbReference type="GO" id="GO:0009055">
    <property type="term" value="F:electron transfer activity"/>
    <property type="evidence" value="ECO:0007669"/>
    <property type="project" value="UniProtKB-UniRule"/>
</dbReference>
<dbReference type="GO" id="GO:0005506">
    <property type="term" value="F:iron ion binding"/>
    <property type="evidence" value="ECO:0007669"/>
    <property type="project" value="UniProtKB-UniRule"/>
</dbReference>
<dbReference type="GO" id="GO:0030151">
    <property type="term" value="F:molybdenum ion binding"/>
    <property type="evidence" value="ECO:0007669"/>
    <property type="project" value="InterPro"/>
</dbReference>
<dbReference type="GO" id="GO:0043546">
    <property type="term" value="F:molybdopterin cofactor binding"/>
    <property type="evidence" value="ECO:0007669"/>
    <property type="project" value="InterPro"/>
</dbReference>
<dbReference type="GO" id="GO:0050140">
    <property type="term" value="F:nitrate reductase (cytochrome) activity"/>
    <property type="evidence" value="ECO:0007669"/>
    <property type="project" value="UniProtKB-EC"/>
</dbReference>
<dbReference type="GO" id="GO:0045333">
    <property type="term" value="P:cellular respiration"/>
    <property type="evidence" value="ECO:0007669"/>
    <property type="project" value="UniProtKB-ARBA"/>
</dbReference>
<dbReference type="GO" id="GO:0006777">
    <property type="term" value="P:Mo-molybdopterin cofactor biosynthetic process"/>
    <property type="evidence" value="ECO:0007669"/>
    <property type="project" value="UniProtKB-UniRule"/>
</dbReference>
<dbReference type="GO" id="GO:0042128">
    <property type="term" value="P:nitrate assimilation"/>
    <property type="evidence" value="ECO:0007669"/>
    <property type="project" value="UniProtKB-UniRule"/>
</dbReference>
<dbReference type="CDD" id="cd02791">
    <property type="entry name" value="MopB_CT_Nitrate-R-NapA-like"/>
    <property type="match status" value="1"/>
</dbReference>
<dbReference type="CDD" id="cd02754">
    <property type="entry name" value="MopB_Nitrate-R-NapA-like"/>
    <property type="match status" value="1"/>
</dbReference>
<dbReference type="FunFam" id="2.40.40.20:FF:000005">
    <property type="entry name" value="Periplasmic nitrate reductase"/>
    <property type="match status" value="1"/>
</dbReference>
<dbReference type="FunFam" id="3.40.228.10:FF:000001">
    <property type="entry name" value="Periplasmic nitrate reductase"/>
    <property type="match status" value="1"/>
</dbReference>
<dbReference type="Gene3D" id="2.40.40.20">
    <property type="match status" value="1"/>
</dbReference>
<dbReference type="Gene3D" id="3.30.200.210">
    <property type="match status" value="1"/>
</dbReference>
<dbReference type="Gene3D" id="3.40.50.740">
    <property type="match status" value="1"/>
</dbReference>
<dbReference type="Gene3D" id="3.40.228.10">
    <property type="entry name" value="Dimethylsulfoxide Reductase, domain 2"/>
    <property type="match status" value="1"/>
</dbReference>
<dbReference type="HAMAP" id="MF_01630">
    <property type="entry name" value="Nitrate_reduct_NapA"/>
    <property type="match status" value="1"/>
</dbReference>
<dbReference type="InterPro" id="IPR009010">
    <property type="entry name" value="Asp_de-COase-like_dom_sf"/>
</dbReference>
<dbReference type="InterPro" id="IPR041957">
    <property type="entry name" value="CT_Nitrate-R-NapA-like"/>
</dbReference>
<dbReference type="InterPro" id="IPR006657">
    <property type="entry name" value="MoPterin_dinucl-bd_dom"/>
</dbReference>
<dbReference type="InterPro" id="IPR006656">
    <property type="entry name" value="Mopterin_OxRdtase"/>
</dbReference>
<dbReference type="InterPro" id="IPR006963">
    <property type="entry name" value="Mopterin_OxRdtase_4Fe-4S_dom"/>
</dbReference>
<dbReference type="InterPro" id="IPR027467">
    <property type="entry name" value="MopterinOxRdtase_cofactor_BS"/>
</dbReference>
<dbReference type="InterPro" id="IPR010051">
    <property type="entry name" value="Periplasm_NO3_reductase_lsu"/>
</dbReference>
<dbReference type="InterPro" id="IPR050123">
    <property type="entry name" value="Prok_molybdopt-oxidoreductase"/>
</dbReference>
<dbReference type="InterPro" id="IPR006311">
    <property type="entry name" value="TAT_signal"/>
</dbReference>
<dbReference type="InterPro" id="IPR019546">
    <property type="entry name" value="TAT_signal_bac_arc"/>
</dbReference>
<dbReference type="NCBIfam" id="TIGR01706">
    <property type="entry name" value="NAPA"/>
    <property type="match status" value="1"/>
</dbReference>
<dbReference type="NCBIfam" id="NF010055">
    <property type="entry name" value="PRK13532.1"/>
    <property type="match status" value="1"/>
</dbReference>
<dbReference type="NCBIfam" id="TIGR01409">
    <property type="entry name" value="TAT_signal_seq"/>
    <property type="match status" value="1"/>
</dbReference>
<dbReference type="PANTHER" id="PTHR43105:SF11">
    <property type="entry name" value="PERIPLASMIC NITRATE REDUCTASE"/>
    <property type="match status" value="1"/>
</dbReference>
<dbReference type="PANTHER" id="PTHR43105">
    <property type="entry name" value="RESPIRATORY NITRATE REDUCTASE"/>
    <property type="match status" value="1"/>
</dbReference>
<dbReference type="Pfam" id="PF04879">
    <property type="entry name" value="Molybdop_Fe4S4"/>
    <property type="match status" value="1"/>
</dbReference>
<dbReference type="Pfam" id="PF00384">
    <property type="entry name" value="Molybdopterin"/>
    <property type="match status" value="1"/>
</dbReference>
<dbReference type="Pfam" id="PF01568">
    <property type="entry name" value="Molydop_binding"/>
    <property type="match status" value="1"/>
</dbReference>
<dbReference type="SMART" id="SM00926">
    <property type="entry name" value="Molybdop_Fe4S4"/>
    <property type="match status" value="1"/>
</dbReference>
<dbReference type="SUPFAM" id="SSF50692">
    <property type="entry name" value="ADC-like"/>
    <property type="match status" value="1"/>
</dbReference>
<dbReference type="SUPFAM" id="SSF53706">
    <property type="entry name" value="Formate dehydrogenase/DMSO reductase, domains 1-3"/>
    <property type="match status" value="1"/>
</dbReference>
<dbReference type="PROSITE" id="PS51669">
    <property type="entry name" value="4FE4S_MOW_BIS_MGD"/>
    <property type="match status" value="1"/>
</dbReference>
<dbReference type="PROSITE" id="PS00551">
    <property type="entry name" value="MOLYBDOPTERIN_PROK_1"/>
    <property type="match status" value="1"/>
</dbReference>
<dbReference type="PROSITE" id="PS51318">
    <property type="entry name" value="TAT"/>
    <property type="match status" value="1"/>
</dbReference>
<reference key="1">
    <citation type="journal article" date="2006" name="Proc. Natl. Acad. Sci. U.S.A.">
        <title>Identification of genes subject to positive selection in uropathogenic strains of Escherichia coli: a comparative genomics approach.</title>
        <authorList>
            <person name="Chen S.L."/>
            <person name="Hung C.-S."/>
            <person name="Xu J."/>
            <person name="Reigstad C.S."/>
            <person name="Magrini V."/>
            <person name="Sabo A."/>
            <person name="Blasiar D."/>
            <person name="Bieri T."/>
            <person name="Meyer R.R."/>
            <person name="Ozersky P."/>
            <person name="Armstrong J.R."/>
            <person name="Fulton R.S."/>
            <person name="Latreille J.P."/>
            <person name="Spieth J."/>
            <person name="Hooton T.M."/>
            <person name="Mardis E.R."/>
            <person name="Hultgren S.J."/>
            <person name="Gordon J.I."/>
        </authorList>
    </citation>
    <scope>NUCLEOTIDE SEQUENCE [LARGE SCALE GENOMIC DNA]</scope>
    <source>
        <strain>UTI89 / UPEC</strain>
    </source>
</reference>
<comment type="function">
    <text evidence="1">Catalytic subunit of the periplasmic nitrate reductase complex NapAB. Receives electrons from NapB and catalyzes the reduction of nitrate to nitrite.</text>
</comment>
<comment type="catalytic activity">
    <reaction evidence="1">
        <text>2 Fe(II)-[cytochrome] + nitrate + 2 H(+) = 2 Fe(III)-[cytochrome] + nitrite + H2O</text>
        <dbReference type="Rhea" id="RHEA:12909"/>
        <dbReference type="Rhea" id="RHEA-COMP:11777"/>
        <dbReference type="Rhea" id="RHEA-COMP:11778"/>
        <dbReference type="ChEBI" id="CHEBI:15377"/>
        <dbReference type="ChEBI" id="CHEBI:15378"/>
        <dbReference type="ChEBI" id="CHEBI:16301"/>
        <dbReference type="ChEBI" id="CHEBI:17632"/>
        <dbReference type="ChEBI" id="CHEBI:29033"/>
        <dbReference type="ChEBI" id="CHEBI:29034"/>
        <dbReference type="EC" id="1.9.6.1"/>
    </reaction>
</comment>
<comment type="cofactor">
    <cofactor evidence="1">
        <name>[4Fe-4S] cluster</name>
        <dbReference type="ChEBI" id="CHEBI:49883"/>
    </cofactor>
    <text evidence="1">Binds 1 [4Fe-4S] cluster.</text>
</comment>
<comment type="cofactor">
    <cofactor evidence="1">
        <name>Mo-bis(molybdopterin guanine dinucleotide)</name>
        <dbReference type="ChEBI" id="CHEBI:60539"/>
    </cofactor>
    <text evidence="1">Binds 1 molybdenum-bis(molybdopterin guanine dinucleotide) (Mo-bis-MGD) cofactor per subunit.</text>
</comment>
<comment type="subunit">
    <text evidence="1">Component of the periplasmic nitrate reductase NapAB complex composed of NapA and NapB.</text>
</comment>
<comment type="subcellular location">
    <subcellularLocation>
        <location evidence="1">Periplasm</location>
    </subcellularLocation>
</comment>
<comment type="PTM">
    <text evidence="1">Predicted to be exported by the Tat system. The position of the signal peptide cleavage has not been experimentally proven.</text>
</comment>
<comment type="similarity">
    <text evidence="1 2">Belongs to the prokaryotic molybdopterin-containing oxidoreductase family. NasA/NapA/NarB subfamily.</text>
</comment>
<feature type="signal peptide" description="Tat-type signal" evidence="1">
    <location>
        <begin position="1"/>
        <end position="31"/>
    </location>
</feature>
<feature type="chain" id="PRO_0000256072" description="Periplasmic nitrate reductase" evidence="1">
    <location>
        <begin position="32"/>
        <end position="828"/>
    </location>
</feature>
<feature type="domain" description="4Fe-4S Mo/W bis-MGD-type" evidence="1">
    <location>
        <begin position="39"/>
        <end position="95"/>
    </location>
</feature>
<feature type="binding site" evidence="1">
    <location>
        <position position="46"/>
    </location>
    <ligand>
        <name>[4Fe-4S] cluster</name>
        <dbReference type="ChEBI" id="CHEBI:49883"/>
    </ligand>
</feature>
<feature type="binding site" evidence="1">
    <location>
        <position position="49"/>
    </location>
    <ligand>
        <name>[4Fe-4S] cluster</name>
        <dbReference type="ChEBI" id="CHEBI:49883"/>
    </ligand>
</feature>
<feature type="binding site" evidence="1">
    <location>
        <position position="53"/>
    </location>
    <ligand>
        <name>[4Fe-4S] cluster</name>
        <dbReference type="ChEBI" id="CHEBI:49883"/>
    </ligand>
</feature>
<feature type="binding site" evidence="1">
    <location>
        <position position="81"/>
    </location>
    <ligand>
        <name>[4Fe-4S] cluster</name>
        <dbReference type="ChEBI" id="CHEBI:49883"/>
    </ligand>
</feature>
<feature type="binding site" evidence="1">
    <location>
        <position position="83"/>
    </location>
    <ligand>
        <name>Mo-bis(molybdopterin guanine dinucleotide)</name>
        <dbReference type="ChEBI" id="CHEBI:60539"/>
    </ligand>
</feature>
<feature type="binding site" evidence="1">
    <location>
        <position position="150"/>
    </location>
    <ligand>
        <name>Mo-bis(molybdopterin guanine dinucleotide)</name>
        <dbReference type="ChEBI" id="CHEBI:60539"/>
    </ligand>
</feature>
<feature type="binding site" evidence="1">
    <location>
        <position position="175"/>
    </location>
    <ligand>
        <name>Mo-bis(molybdopterin guanine dinucleotide)</name>
        <dbReference type="ChEBI" id="CHEBI:60539"/>
    </ligand>
</feature>
<feature type="binding site" evidence="1">
    <location>
        <position position="179"/>
    </location>
    <ligand>
        <name>Mo-bis(molybdopterin guanine dinucleotide)</name>
        <dbReference type="ChEBI" id="CHEBI:60539"/>
    </ligand>
</feature>
<feature type="binding site" evidence="1">
    <location>
        <begin position="212"/>
        <end position="219"/>
    </location>
    <ligand>
        <name>Mo-bis(molybdopterin guanine dinucleotide)</name>
        <dbReference type="ChEBI" id="CHEBI:60539"/>
    </ligand>
</feature>
<feature type="binding site" evidence="1">
    <location>
        <begin position="243"/>
        <end position="247"/>
    </location>
    <ligand>
        <name>Mo-bis(molybdopterin guanine dinucleotide)</name>
        <dbReference type="ChEBI" id="CHEBI:60539"/>
    </ligand>
</feature>
<feature type="binding site" evidence="1">
    <location>
        <begin position="262"/>
        <end position="264"/>
    </location>
    <ligand>
        <name>Mo-bis(molybdopterin guanine dinucleotide)</name>
        <dbReference type="ChEBI" id="CHEBI:60539"/>
    </ligand>
</feature>
<feature type="binding site" evidence="1">
    <location>
        <position position="372"/>
    </location>
    <ligand>
        <name>Mo-bis(molybdopterin guanine dinucleotide)</name>
        <dbReference type="ChEBI" id="CHEBI:60539"/>
    </ligand>
</feature>
<feature type="binding site" evidence="1">
    <location>
        <position position="376"/>
    </location>
    <ligand>
        <name>Mo-bis(molybdopterin guanine dinucleotide)</name>
        <dbReference type="ChEBI" id="CHEBI:60539"/>
    </ligand>
</feature>
<feature type="binding site" evidence="1">
    <location>
        <position position="482"/>
    </location>
    <ligand>
        <name>Mo-bis(molybdopterin guanine dinucleotide)</name>
        <dbReference type="ChEBI" id="CHEBI:60539"/>
    </ligand>
</feature>
<feature type="binding site" evidence="1">
    <location>
        <begin position="508"/>
        <end position="509"/>
    </location>
    <ligand>
        <name>Mo-bis(molybdopterin guanine dinucleotide)</name>
        <dbReference type="ChEBI" id="CHEBI:60539"/>
    </ligand>
</feature>
<feature type="binding site" evidence="1">
    <location>
        <position position="531"/>
    </location>
    <ligand>
        <name>Mo-bis(molybdopterin guanine dinucleotide)</name>
        <dbReference type="ChEBI" id="CHEBI:60539"/>
    </ligand>
</feature>
<feature type="binding site" evidence="1">
    <location>
        <position position="558"/>
    </location>
    <ligand>
        <name>Mo-bis(molybdopterin guanine dinucleotide)</name>
        <dbReference type="ChEBI" id="CHEBI:60539"/>
    </ligand>
</feature>
<feature type="binding site" evidence="1">
    <location>
        <begin position="718"/>
        <end position="727"/>
    </location>
    <ligand>
        <name>Mo-bis(molybdopterin guanine dinucleotide)</name>
        <dbReference type="ChEBI" id="CHEBI:60539"/>
    </ligand>
</feature>
<feature type="binding site" evidence="1">
    <location>
        <position position="794"/>
    </location>
    <ligand>
        <name>substrate</name>
    </ligand>
</feature>
<feature type="binding site" evidence="1">
    <location>
        <position position="802"/>
    </location>
    <ligand>
        <name>Mo-bis(molybdopterin guanine dinucleotide)</name>
        <dbReference type="ChEBI" id="CHEBI:60539"/>
    </ligand>
</feature>
<feature type="binding site" evidence="1">
    <location>
        <position position="819"/>
    </location>
    <ligand>
        <name>Mo-bis(molybdopterin guanine dinucleotide)</name>
        <dbReference type="ChEBI" id="CHEBI:60539"/>
    </ligand>
</feature>
<evidence type="ECO:0000255" key="1">
    <source>
        <dbReference type="HAMAP-Rule" id="MF_01630"/>
    </source>
</evidence>
<evidence type="ECO:0000305" key="2"/>
<organism>
    <name type="scientific">Escherichia coli (strain UTI89 / UPEC)</name>
    <dbReference type="NCBI Taxonomy" id="364106"/>
    <lineage>
        <taxon>Bacteria</taxon>
        <taxon>Pseudomonadati</taxon>
        <taxon>Pseudomonadota</taxon>
        <taxon>Gammaproteobacteria</taxon>
        <taxon>Enterobacterales</taxon>
        <taxon>Enterobacteriaceae</taxon>
        <taxon>Escherichia</taxon>
    </lineage>
</organism>
<proteinExistence type="inferred from homology"/>
<name>NAPA_ECOUT</name>
<keyword id="KW-0004">4Fe-4S</keyword>
<keyword id="KW-0249">Electron transport</keyword>
<keyword id="KW-0408">Iron</keyword>
<keyword id="KW-0411">Iron-sulfur</keyword>
<keyword id="KW-0479">Metal-binding</keyword>
<keyword id="KW-0500">Molybdenum</keyword>
<keyword id="KW-0534">Nitrate assimilation</keyword>
<keyword id="KW-0560">Oxidoreductase</keyword>
<keyword id="KW-0574">Periplasm</keyword>
<keyword id="KW-0732">Signal</keyword>
<keyword id="KW-0813">Transport</keyword>
<accession>Q1R9L3</accession>
<sequence>MKLSRRSFMKANAVAAAAAAAGLSVPGVARAVVGQQEAIKWDKAPCRFCGTGCGVLVGTQQGRVVACQGDPDAPVNRGLNCIKGYFLPKIMYGKDRLTQPLLRMKNGKYDKEGEFTPITWDQAFDVMEDKFKTALKEKGPESIGMFGSGQWTIWEGYAASKLFKAGFRSNNIDPNARHCMASAVVGFMRTFGMDEPMGCYDDIEQADAFVLWGSNMAEMHPILWSRITNRRLSNQNVTVAVLSTYQHRSFELADNGIIFTPQSDLVILNYIANYIIQNNAINQDFFSKHVNLRKGATDIGYGLRPTHPLEKAAKNPGSDASEPMSFEDYKAFVAEYTLEKTAEMTGVPKDQLEQLAQLYADPNKKVISYWTMGFNQHTRGVWANNLVYNLHLLTGKISQPGCGPFSLTGQPSACGTAREVGTFAHRLPADMVVTNEKHRDICEKKWNIPSGTIPAKIGLHAVAQDRALKDGKLNVYWTMCTNNMQAGPNINEERMPGWRDPRNFIIVSDPYPTVSALAADLILPTAMWVEKEGAYGNAERRTQFWRQQVQAPGEAKSDLWQLVQFSRRFKTEEVWPEELLAKKPELRGKTLYEVLYATPEVSKFPVSELAEDQLNDESRELGFYLQKGLFEEYAWFGRGHGHDLAPFDDYHKARGLRWPVVNGKETQWRYSEGNDPYVKAGEGYKFYGKPDGKAVIFALPFEPAAEAPDEEYDLWLSTGRVLEHWHTGSMTRRVPELHRAFPEAVLFIHPLDAKARDLRRGDKVKVVSRRGEVISIVETRGRNRPPQGLVYMPFFDAAQLVNKLTLDATDPLSKETDFKKCAVKLEKV</sequence>